<proteinExistence type="inferred from homology"/>
<gene>
    <name type="primary">graR</name>
    <name type="ordered locus">USA300HOU_0680</name>
</gene>
<name>GRAR_STAAT</name>
<accession>A8Z181</accession>
<keyword id="KW-0010">Activator</keyword>
<keyword id="KW-0046">Antibiotic resistance</keyword>
<keyword id="KW-0963">Cytoplasm</keyword>
<keyword id="KW-0238">DNA-binding</keyword>
<keyword id="KW-0597">Phosphoprotein</keyword>
<keyword id="KW-0678">Repressor</keyword>
<keyword id="KW-0804">Transcription</keyword>
<keyword id="KW-0805">Transcription regulation</keyword>
<keyword id="KW-0902">Two-component regulatory system</keyword>
<keyword id="KW-0843">Virulence</keyword>
<dbReference type="EMBL" id="CP000730">
    <property type="protein sequence ID" value="ABX28702.1"/>
    <property type="molecule type" value="Genomic_DNA"/>
</dbReference>
<dbReference type="RefSeq" id="WP_001166505.1">
    <property type="nucleotide sequence ID" value="NC_010079.1"/>
</dbReference>
<dbReference type="SMR" id="A8Z181"/>
<dbReference type="KEGG" id="sax:USA300HOU_0680"/>
<dbReference type="HOGENOM" id="CLU_000445_30_3_9"/>
<dbReference type="GO" id="GO:0005829">
    <property type="term" value="C:cytosol"/>
    <property type="evidence" value="ECO:0007669"/>
    <property type="project" value="TreeGrafter"/>
</dbReference>
<dbReference type="GO" id="GO:0032993">
    <property type="term" value="C:protein-DNA complex"/>
    <property type="evidence" value="ECO:0007669"/>
    <property type="project" value="TreeGrafter"/>
</dbReference>
<dbReference type="GO" id="GO:0000156">
    <property type="term" value="F:phosphorelay response regulator activity"/>
    <property type="evidence" value="ECO:0007669"/>
    <property type="project" value="TreeGrafter"/>
</dbReference>
<dbReference type="GO" id="GO:0000976">
    <property type="term" value="F:transcription cis-regulatory region binding"/>
    <property type="evidence" value="ECO:0007669"/>
    <property type="project" value="TreeGrafter"/>
</dbReference>
<dbReference type="GO" id="GO:0006355">
    <property type="term" value="P:regulation of DNA-templated transcription"/>
    <property type="evidence" value="ECO:0007669"/>
    <property type="project" value="InterPro"/>
</dbReference>
<dbReference type="GO" id="GO:0046677">
    <property type="term" value="P:response to antibiotic"/>
    <property type="evidence" value="ECO:0007669"/>
    <property type="project" value="UniProtKB-KW"/>
</dbReference>
<dbReference type="CDD" id="cd18159">
    <property type="entry name" value="REC_OmpR_NsrR-like"/>
    <property type="match status" value="1"/>
</dbReference>
<dbReference type="CDD" id="cd00383">
    <property type="entry name" value="trans_reg_C"/>
    <property type="match status" value="1"/>
</dbReference>
<dbReference type="FunFam" id="3.40.50.2300:FF:000232">
    <property type="entry name" value="Response regulator GraR"/>
    <property type="match status" value="1"/>
</dbReference>
<dbReference type="FunFam" id="1.10.10.10:FF:000546">
    <property type="entry name" value="Two-component response regulator GraR"/>
    <property type="match status" value="1"/>
</dbReference>
<dbReference type="Gene3D" id="3.40.50.2300">
    <property type="match status" value="1"/>
</dbReference>
<dbReference type="Gene3D" id="1.10.10.10">
    <property type="entry name" value="Winged helix-like DNA-binding domain superfamily/Winged helix DNA-binding domain"/>
    <property type="match status" value="1"/>
</dbReference>
<dbReference type="InterPro" id="IPR011006">
    <property type="entry name" value="CheY-like_superfamily"/>
</dbReference>
<dbReference type="InterPro" id="IPR001867">
    <property type="entry name" value="OmpR/PhoB-type_DNA-bd"/>
</dbReference>
<dbReference type="InterPro" id="IPR016032">
    <property type="entry name" value="Sig_transdc_resp-reg_C-effctor"/>
</dbReference>
<dbReference type="InterPro" id="IPR001789">
    <property type="entry name" value="Sig_transdc_resp-reg_receiver"/>
</dbReference>
<dbReference type="InterPro" id="IPR039420">
    <property type="entry name" value="WalR-like"/>
</dbReference>
<dbReference type="InterPro" id="IPR036388">
    <property type="entry name" value="WH-like_DNA-bd_sf"/>
</dbReference>
<dbReference type="PANTHER" id="PTHR48111">
    <property type="entry name" value="REGULATOR OF RPOS"/>
    <property type="match status" value="1"/>
</dbReference>
<dbReference type="PANTHER" id="PTHR48111:SF27">
    <property type="entry name" value="SENSORY TRANSDUCTION PROTEIN BCER"/>
    <property type="match status" value="1"/>
</dbReference>
<dbReference type="Pfam" id="PF00072">
    <property type="entry name" value="Response_reg"/>
    <property type="match status" value="1"/>
</dbReference>
<dbReference type="Pfam" id="PF00486">
    <property type="entry name" value="Trans_reg_C"/>
    <property type="match status" value="1"/>
</dbReference>
<dbReference type="SMART" id="SM00448">
    <property type="entry name" value="REC"/>
    <property type="match status" value="1"/>
</dbReference>
<dbReference type="SMART" id="SM00862">
    <property type="entry name" value="Trans_reg_C"/>
    <property type="match status" value="1"/>
</dbReference>
<dbReference type="SUPFAM" id="SSF46894">
    <property type="entry name" value="C-terminal effector domain of the bipartite response regulators"/>
    <property type="match status" value="1"/>
</dbReference>
<dbReference type="SUPFAM" id="SSF52172">
    <property type="entry name" value="CheY-like"/>
    <property type="match status" value="1"/>
</dbReference>
<dbReference type="PROSITE" id="PS51755">
    <property type="entry name" value="OMPR_PHOB"/>
    <property type="match status" value="1"/>
</dbReference>
<dbReference type="PROSITE" id="PS50110">
    <property type="entry name" value="RESPONSE_REGULATORY"/>
    <property type="match status" value="1"/>
</dbReference>
<evidence type="ECO:0000250" key="1"/>
<evidence type="ECO:0000250" key="2">
    <source>
        <dbReference type="UniProtKB" id="Q2G0D9"/>
    </source>
</evidence>
<evidence type="ECO:0000250" key="3">
    <source>
        <dbReference type="UniProtKB" id="Q2G0E0"/>
    </source>
</evidence>
<evidence type="ECO:0000255" key="4">
    <source>
        <dbReference type="PROSITE-ProRule" id="PRU00169"/>
    </source>
</evidence>
<evidence type="ECO:0000255" key="5">
    <source>
        <dbReference type="PROSITE-ProRule" id="PRU01091"/>
    </source>
</evidence>
<protein>
    <recommendedName>
        <fullName>Response regulator protein GraR</fullName>
    </recommendedName>
    <alternativeName>
        <fullName>Glycopeptide resistance-associated protein R</fullName>
    </alternativeName>
</protein>
<reference key="1">
    <citation type="journal article" date="2007" name="BMC Microbiol.">
        <title>Subtle genetic changes enhance virulence of methicillin resistant and sensitive Staphylococcus aureus.</title>
        <authorList>
            <person name="Highlander S.K."/>
            <person name="Hulten K.G."/>
            <person name="Qin X."/>
            <person name="Jiang H."/>
            <person name="Yerrapragada S."/>
            <person name="Mason E.O. Jr."/>
            <person name="Shang Y."/>
            <person name="Williams T.M."/>
            <person name="Fortunov R.M."/>
            <person name="Liu Y."/>
            <person name="Igboeli O."/>
            <person name="Petrosino J."/>
            <person name="Tirumalai M."/>
            <person name="Uzman A."/>
            <person name="Fox G.E."/>
            <person name="Cardenas A.M."/>
            <person name="Muzny D.M."/>
            <person name="Hemphill L."/>
            <person name="Ding Y."/>
            <person name="Dugan S."/>
            <person name="Blyth P.R."/>
            <person name="Buhay C.J."/>
            <person name="Dinh H.H."/>
            <person name="Hawes A.C."/>
            <person name="Holder M."/>
            <person name="Kovar C.L."/>
            <person name="Lee S.L."/>
            <person name="Liu W."/>
            <person name="Nazareth L.V."/>
            <person name="Wang Q."/>
            <person name="Zhou J."/>
            <person name="Kaplan S.L."/>
            <person name="Weinstock G.M."/>
        </authorList>
    </citation>
    <scope>NUCLEOTIDE SEQUENCE [LARGE SCALE GENOMIC DNA]</scope>
    <source>
        <strain>USA300 / TCH1516</strain>
    </source>
</reference>
<comment type="function">
    <text evidence="3">Member of the two-component regulatory system GraR/GraS involved in resistance against cationic antimicrobial peptides (CAMPs). Upon phosphorylation by GraS, functions as a transcription regulator by direct binding to promoter regions of target genes such as adhesins, exoproteins, transporters, toxins, and proteins involved in cell wall synthesis. Down-regulates the expression of many genes involved in RNA and amino acid synthesis or glycolysis.</text>
</comment>
<comment type="subunit">
    <text evidence="2">Interacts with GraX.</text>
</comment>
<comment type="subcellular location">
    <subcellularLocation>
        <location evidence="1">Cytoplasm</location>
    </subcellularLocation>
</comment>
<comment type="PTM">
    <text evidence="3">Phosphorylated by GraS. Phosphorylated by Stk1; phosphorylation increases the DNA-binding activity of GraR.</text>
</comment>
<feature type="chain" id="PRO_0000347907" description="Response regulator protein GraR">
    <location>
        <begin position="1"/>
        <end position="224"/>
    </location>
</feature>
<feature type="domain" description="Response regulatory" evidence="4">
    <location>
        <begin position="2"/>
        <end position="115"/>
    </location>
</feature>
<feature type="DNA-binding region" description="OmpR/PhoB-type" evidence="5">
    <location>
        <begin position="126"/>
        <end position="224"/>
    </location>
</feature>
<feature type="modified residue" description="4-aspartylphosphate" evidence="4">
    <location>
        <position position="51"/>
    </location>
</feature>
<feature type="modified residue" description="Phosphothreonine" evidence="3">
    <location>
        <position position="128"/>
    </location>
</feature>
<feature type="modified residue" description="Phosphothreonine" evidence="3">
    <location>
        <position position="130"/>
    </location>
</feature>
<feature type="modified residue" description="Phosphothreonine" evidence="3">
    <location>
        <position position="149"/>
    </location>
</feature>
<organism>
    <name type="scientific">Staphylococcus aureus (strain USA300 / TCH1516)</name>
    <dbReference type="NCBI Taxonomy" id="451516"/>
    <lineage>
        <taxon>Bacteria</taxon>
        <taxon>Bacillati</taxon>
        <taxon>Bacillota</taxon>
        <taxon>Bacilli</taxon>
        <taxon>Bacillales</taxon>
        <taxon>Staphylococcaceae</taxon>
        <taxon>Staphylococcus</taxon>
    </lineage>
</organism>
<sequence>MQILLVEDDNTLFQELKKELEQWDFNVAGIEDFGKVMDTFESFNPEIVILDVQLPKYDGFYWCRKMREVSNVPILFLSSRDNPMDQVMSMELGADDYMQKPFYTNVLIAKLQAIYRRVYEFTAEEKRTLTWQDAVVDLSKDSIQKGDQTIFLSKTEMIILEILITKKNQIVSRDTIITALWDDEAFVSDNTLTVNVNRLRKKLSEISMDSAIETKVGKGYMAHE</sequence>